<accession>Q82AA4</accession>
<keyword id="KW-0028">Amino-acid biosynthesis</keyword>
<keyword id="KW-0963">Cytoplasm</keyword>
<keyword id="KW-0368">Histidine biosynthesis</keyword>
<keyword id="KW-0456">Lyase</keyword>
<keyword id="KW-1185">Reference proteome</keyword>
<evidence type="ECO:0000255" key="1">
    <source>
        <dbReference type="HAMAP-Rule" id="MF_00076"/>
    </source>
</evidence>
<reference key="1">
    <citation type="journal article" date="2001" name="Proc. Natl. Acad. Sci. U.S.A.">
        <title>Genome sequence of an industrial microorganism Streptomyces avermitilis: deducing the ability of producing secondary metabolites.</title>
        <authorList>
            <person name="Omura S."/>
            <person name="Ikeda H."/>
            <person name="Ishikawa J."/>
            <person name="Hanamoto A."/>
            <person name="Takahashi C."/>
            <person name="Shinose M."/>
            <person name="Takahashi Y."/>
            <person name="Horikawa H."/>
            <person name="Nakazawa H."/>
            <person name="Osonoe T."/>
            <person name="Kikuchi H."/>
            <person name="Shiba T."/>
            <person name="Sakaki Y."/>
            <person name="Hattori M."/>
        </authorList>
    </citation>
    <scope>NUCLEOTIDE SEQUENCE [LARGE SCALE GENOMIC DNA]</scope>
    <source>
        <strain>ATCC 31267 / DSM 46492 / JCM 5070 / NBRC 14893 / NCIMB 12804 / NRRL 8165 / MA-4680</strain>
    </source>
</reference>
<reference key="2">
    <citation type="journal article" date="2003" name="Nat. Biotechnol.">
        <title>Complete genome sequence and comparative analysis of the industrial microorganism Streptomyces avermitilis.</title>
        <authorList>
            <person name="Ikeda H."/>
            <person name="Ishikawa J."/>
            <person name="Hanamoto A."/>
            <person name="Shinose M."/>
            <person name="Kikuchi H."/>
            <person name="Shiba T."/>
            <person name="Sakaki Y."/>
            <person name="Hattori M."/>
            <person name="Omura S."/>
        </authorList>
    </citation>
    <scope>NUCLEOTIDE SEQUENCE [LARGE SCALE GENOMIC DNA]</scope>
    <source>
        <strain>ATCC 31267 / DSM 46492 / JCM 5070 / NBRC 14893 / NCIMB 12804 / NRRL 8165 / MA-4680</strain>
    </source>
</reference>
<dbReference type="EC" id="4.2.1.19" evidence="1"/>
<dbReference type="EMBL" id="BA000030">
    <property type="protein sequence ID" value="BAC73866.1"/>
    <property type="molecule type" value="Genomic_DNA"/>
</dbReference>
<dbReference type="RefSeq" id="WP_010987556.1">
    <property type="nucleotide sequence ID" value="NZ_JZJK01000089.1"/>
</dbReference>
<dbReference type="SMR" id="Q82AA4"/>
<dbReference type="GeneID" id="41543232"/>
<dbReference type="KEGG" id="sma:SAVERM_6155"/>
<dbReference type="eggNOG" id="COG0131">
    <property type="taxonomic scope" value="Bacteria"/>
</dbReference>
<dbReference type="HOGENOM" id="CLU_044308_3_0_11"/>
<dbReference type="OrthoDB" id="9790411at2"/>
<dbReference type="UniPathway" id="UPA00031">
    <property type="reaction ID" value="UER00011"/>
</dbReference>
<dbReference type="Proteomes" id="UP000000428">
    <property type="component" value="Chromosome"/>
</dbReference>
<dbReference type="GO" id="GO:0005737">
    <property type="term" value="C:cytoplasm"/>
    <property type="evidence" value="ECO:0007669"/>
    <property type="project" value="UniProtKB-SubCell"/>
</dbReference>
<dbReference type="GO" id="GO:0004424">
    <property type="term" value="F:imidazoleglycerol-phosphate dehydratase activity"/>
    <property type="evidence" value="ECO:0007669"/>
    <property type="project" value="UniProtKB-UniRule"/>
</dbReference>
<dbReference type="GO" id="GO:0000105">
    <property type="term" value="P:L-histidine biosynthetic process"/>
    <property type="evidence" value="ECO:0007669"/>
    <property type="project" value="UniProtKB-UniRule"/>
</dbReference>
<dbReference type="CDD" id="cd07914">
    <property type="entry name" value="IGPD"/>
    <property type="match status" value="1"/>
</dbReference>
<dbReference type="FunFam" id="3.30.230.40:FF:000001">
    <property type="entry name" value="Imidazoleglycerol-phosphate dehydratase HisB"/>
    <property type="match status" value="1"/>
</dbReference>
<dbReference type="FunFam" id="3.30.230.40:FF:000003">
    <property type="entry name" value="Imidazoleglycerol-phosphate dehydratase HisB"/>
    <property type="match status" value="1"/>
</dbReference>
<dbReference type="Gene3D" id="3.30.230.40">
    <property type="entry name" value="Imidazole glycerol phosphate dehydratase, domain 1"/>
    <property type="match status" value="2"/>
</dbReference>
<dbReference type="HAMAP" id="MF_00076">
    <property type="entry name" value="HisB"/>
    <property type="match status" value="1"/>
</dbReference>
<dbReference type="InterPro" id="IPR038494">
    <property type="entry name" value="IGPD_sf"/>
</dbReference>
<dbReference type="InterPro" id="IPR000807">
    <property type="entry name" value="ImidazoleglycerolP_deHydtase"/>
</dbReference>
<dbReference type="InterPro" id="IPR020565">
    <property type="entry name" value="ImidazoleglycerP_deHydtase_CS"/>
</dbReference>
<dbReference type="InterPro" id="IPR020568">
    <property type="entry name" value="Ribosomal_Su5_D2-typ_SF"/>
</dbReference>
<dbReference type="NCBIfam" id="NF002110">
    <property type="entry name" value="PRK00951.1-6"/>
    <property type="match status" value="1"/>
</dbReference>
<dbReference type="NCBIfam" id="NF002111">
    <property type="entry name" value="PRK00951.2-1"/>
    <property type="match status" value="1"/>
</dbReference>
<dbReference type="NCBIfam" id="NF002114">
    <property type="entry name" value="PRK00951.2-4"/>
    <property type="match status" value="1"/>
</dbReference>
<dbReference type="PANTHER" id="PTHR23133:SF2">
    <property type="entry name" value="IMIDAZOLEGLYCEROL-PHOSPHATE DEHYDRATASE"/>
    <property type="match status" value="1"/>
</dbReference>
<dbReference type="PANTHER" id="PTHR23133">
    <property type="entry name" value="IMIDAZOLEGLYCEROL-PHOSPHATE DEHYDRATASE HIS7"/>
    <property type="match status" value="1"/>
</dbReference>
<dbReference type="Pfam" id="PF00475">
    <property type="entry name" value="IGPD"/>
    <property type="match status" value="1"/>
</dbReference>
<dbReference type="SUPFAM" id="SSF54211">
    <property type="entry name" value="Ribosomal protein S5 domain 2-like"/>
    <property type="match status" value="2"/>
</dbReference>
<dbReference type="PROSITE" id="PS00954">
    <property type="entry name" value="IGP_DEHYDRATASE_1"/>
    <property type="match status" value="1"/>
</dbReference>
<dbReference type="PROSITE" id="PS00955">
    <property type="entry name" value="IGP_DEHYDRATASE_2"/>
    <property type="match status" value="1"/>
</dbReference>
<sequence length="197" mass="21577">MSRVGRVERTTKETSVLVEIDLDGSGKVDVSTGVGFYDHMLDQLGRHGLFDLTVKTEGDLHIDSHHTIEDTALALGAAFKQALGDKVGIYRFGNCTVPLDESLAQVTVDLSGRPYLVHTEPENMAPMIGEYDTTMTRHILESFVAQAQIALHVHVPYGRNAHHIVECQFKALARALRYASERDPRAAGILPSTKGAL</sequence>
<organism>
    <name type="scientific">Streptomyces avermitilis (strain ATCC 31267 / DSM 46492 / JCM 5070 / NBRC 14893 / NCIMB 12804 / NRRL 8165 / MA-4680)</name>
    <dbReference type="NCBI Taxonomy" id="227882"/>
    <lineage>
        <taxon>Bacteria</taxon>
        <taxon>Bacillati</taxon>
        <taxon>Actinomycetota</taxon>
        <taxon>Actinomycetes</taxon>
        <taxon>Kitasatosporales</taxon>
        <taxon>Streptomycetaceae</taxon>
        <taxon>Streptomyces</taxon>
    </lineage>
</organism>
<feature type="chain" id="PRO_0000158173" description="Imidazoleglycerol-phosphate dehydratase">
    <location>
        <begin position="1"/>
        <end position="197"/>
    </location>
</feature>
<gene>
    <name evidence="1" type="primary">hisB</name>
    <name type="ordered locus">SAV_6155</name>
</gene>
<protein>
    <recommendedName>
        <fullName evidence="1">Imidazoleglycerol-phosphate dehydratase</fullName>
        <shortName evidence="1">IGPD</shortName>
        <ecNumber evidence="1">4.2.1.19</ecNumber>
    </recommendedName>
</protein>
<proteinExistence type="inferred from homology"/>
<comment type="catalytic activity">
    <reaction evidence="1">
        <text>D-erythro-1-(imidazol-4-yl)glycerol 3-phosphate = 3-(imidazol-4-yl)-2-oxopropyl phosphate + H2O</text>
        <dbReference type="Rhea" id="RHEA:11040"/>
        <dbReference type="ChEBI" id="CHEBI:15377"/>
        <dbReference type="ChEBI" id="CHEBI:57766"/>
        <dbReference type="ChEBI" id="CHEBI:58278"/>
        <dbReference type="EC" id="4.2.1.19"/>
    </reaction>
</comment>
<comment type="pathway">
    <text evidence="1">Amino-acid biosynthesis; L-histidine biosynthesis; L-histidine from 5-phospho-alpha-D-ribose 1-diphosphate: step 6/9.</text>
</comment>
<comment type="subcellular location">
    <subcellularLocation>
        <location evidence="1">Cytoplasm</location>
    </subcellularLocation>
</comment>
<comment type="similarity">
    <text evidence="1">Belongs to the imidazoleglycerol-phosphate dehydratase family.</text>
</comment>
<name>HIS7_STRAW</name>